<reference key="1">
    <citation type="journal article" date="1999" name="Mol. Phylogenet. Evol.">
        <title>Systematic relationships within the dasyurid marsupial tribe Sminthopsini -- a multigene approach.</title>
        <authorList>
            <person name="Blacket M.J."/>
            <person name="Krajewski C."/>
            <person name="Labrinidis A."/>
            <person name="Cambron B."/>
            <person name="Cooper S."/>
            <person name="Westerman M."/>
        </authorList>
    </citation>
    <scope>NUCLEOTIDE SEQUENCE [GENOMIC DNA]</scope>
</reference>
<proteinExistence type="evidence at transcript level"/>
<feature type="chain" id="PRO_0000191562" description="Sperm protamine P1">
    <location>
        <begin position="1"/>
        <end position="63"/>
    </location>
</feature>
<feature type="region of interest" description="Disordered" evidence="2">
    <location>
        <begin position="1"/>
        <end position="63"/>
    </location>
</feature>
<dbReference type="EMBL" id="AF089874">
    <property type="protein sequence ID" value="AAD55333.1"/>
    <property type="molecule type" value="Genomic_DNA"/>
</dbReference>
<dbReference type="GO" id="GO:0000786">
    <property type="term" value="C:nucleosome"/>
    <property type="evidence" value="ECO:0007669"/>
    <property type="project" value="UniProtKB-KW"/>
</dbReference>
<dbReference type="GO" id="GO:0005634">
    <property type="term" value="C:nucleus"/>
    <property type="evidence" value="ECO:0007669"/>
    <property type="project" value="UniProtKB-SubCell"/>
</dbReference>
<dbReference type="GO" id="GO:0003677">
    <property type="term" value="F:DNA binding"/>
    <property type="evidence" value="ECO:0007669"/>
    <property type="project" value="UniProtKB-KW"/>
</dbReference>
<dbReference type="GO" id="GO:0030261">
    <property type="term" value="P:chromosome condensation"/>
    <property type="evidence" value="ECO:0007669"/>
    <property type="project" value="UniProtKB-KW"/>
</dbReference>
<dbReference type="GO" id="GO:0035092">
    <property type="term" value="P:sperm DNA condensation"/>
    <property type="evidence" value="ECO:0007669"/>
    <property type="project" value="InterPro"/>
</dbReference>
<dbReference type="InterPro" id="IPR000221">
    <property type="entry name" value="Protamine_P1"/>
</dbReference>
<dbReference type="PROSITE" id="PS00048">
    <property type="entry name" value="PROTAMINE_P1"/>
    <property type="match status" value="1"/>
</dbReference>
<name>HSP1_SMIDL</name>
<evidence type="ECO:0000250" key="1"/>
<evidence type="ECO:0000256" key="2">
    <source>
        <dbReference type="SAM" id="MobiDB-lite"/>
    </source>
</evidence>
<evidence type="ECO:0000305" key="3"/>
<organism>
    <name type="scientific">Sminthopsis dolichura</name>
    <name type="common">Little long-tailed dunnart</name>
    <dbReference type="NCBI Taxonomy" id="75754"/>
    <lineage>
        <taxon>Eukaryota</taxon>
        <taxon>Metazoa</taxon>
        <taxon>Chordata</taxon>
        <taxon>Craniata</taxon>
        <taxon>Vertebrata</taxon>
        <taxon>Euteleostomi</taxon>
        <taxon>Mammalia</taxon>
        <taxon>Metatheria</taxon>
        <taxon>Dasyuromorphia</taxon>
        <taxon>Dasyuridae</taxon>
        <taxon>Sminthopsis</taxon>
    </lineage>
</organism>
<keyword id="KW-0158">Chromosome</keyword>
<keyword id="KW-0217">Developmental protein</keyword>
<keyword id="KW-0221">Differentiation</keyword>
<keyword id="KW-0226">DNA condensation</keyword>
<keyword id="KW-0238">DNA-binding</keyword>
<keyword id="KW-0544">Nucleosome core</keyword>
<keyword id="KW-0539">Nucleus</keyword>
<keyword id="KW-0744">Spermatogenesis</keyword>
<accession>Q71UG7</accession>
<protein>
    <recommendedName>
        <fullName>Sperm protamine P1</fullName>
    </recommendedName>
</protein>
<sequence length="63" mass="8697">MARYRRHSRSRSRSRYRRRRRRRSRHHNRRRTYRRSRRHSRRRRGRRRGYSRRRYSRRGRRRY</sequence>
<gene>
    <name type="primary">PRM1</name>
</gene>
<comment type="function">
    <text evidence="1">Protamines substitute for histones in the chromatin of sperm during the haploid phase of spermatogenesis. They compact sperm DNA into a highly condensed, stable and inactive complex (By similarity).</text>
</comment>
<comment type="subcellular location">
    <subcellularLocation>
        <location evidence="1">Nucleus</location>
    </subcellularLocation>
    <subcellularLocation>
        <location evidence="1">Chromosome</location>
    </subcellularLocation>
</comment>
<comment type="tissue specificity">
    <text>Testis.</text>
</comment>
<comment type="similarity">
    <text evidence="3">Belongs to the protamine P1 family.</text>
</comment>